<reference key="1">
    <citation type="journal article" date="2008" name="J. Bacteriol.">
        <title>Complete genome sequence of the soil actinomycete Kocuria rhizophila.</title>
        <authorList>
            <person name="Takarada H."/>
            <person name="Sekine M."/>
            <person name="Kosugi H."/>
            <person name="Matsuo Y."/>
            <person name="Fujisawa T."/>
            <person name="Omata S."/>
            <person name="Kishi E."/>
            <person name="Shimizu A."/>
            <person name="Tsukatani N."/>
            <person name="Tanikawa S."/>
            <person name="Fujita N."/>
            <person name="Harayama S."/>
        </authorList>
    </citation>
    <scope>NUCLEOTIDE SEQUENCE [LARGE SCALE GENOMIC DNA]</scope>
    <source>
        <strain>ATCC 9341 / DSM 348 / NBRC 103217 / DC2201</strain>
    </source>
</reference>
<protein>
    <recommendedName>
        <fullName evidence="1">Dihydroxy-acid dehydratase</fullName>
        <shortName evidence="1">DAD</shortName>
        <ecNumber evidence="1">4.2.1.9</ecNumber>
    </recommendedName>
</protein>
<name>ILVD_KOCRD</name>
<organism>
    <name type="scientific">Kocuria rhizophila (strain ATCC 9341 / DSM 348 / NBRC 103217 / DC2201)</name>
    <dbReference type="NCBI Taxonomy" id="378753"/>
    <lineage>
        <taxon>Bacteria</taxon>
        <taxon>Bacillati</taxon>
        <taxon>Actinomycetota</taxon>
        <taxon>Actinomycetes</taxon>
        <taxon>Micrococcales</taxon>
        <taxon>Micrococcaceae</taxon>
        <taxon>Kocuria</taxon>
    </lineage>
</organism>
<accession>B2GLR9</accession>
<keyword id="KW-0001">2Fe-2S</keyword>
<keyword id="KW-0028">Amino-acid biosynthesis</keyword>
<keyword id="KW-0100">Branched-chain amino acid biosynthesis</keyword>
<keyword id="KW-0408">Iron</keyword>
<keyword id="KW-0411">Iron-sulfur</keyword>
<keyword id="KW-0456">Lyase</keyword>
<keyword id="KW-0460">Magnesium</keyword>
<keyword id="KW-0479">Metal-binding</keyword>
<keyword id="KW-1185">Reference proteome</keyword>
<proteinExistence type="inferred from homology"/>
<comment type="function">
    <text evidence="1">Functions in the biosynthesis of branched-chain amino acids. Catalyzes the dehydration of (2R,3R)-2,3-dihydroxy-3-methylpentanoate (2,3-dihydroxy-3-methylvalerate) into 2-oxo-3-methylpentanoate (2-oxo-3-methylvalerate) and of (2R)-2,3-dihydroxy-3-methylbutanoate (2,3-dihydroxyisovalerate) into 2-oxo-3-methylbutanoate (2-oxoisovalerate), the penultimate precursor to L-isoleucine and L-valine, respectively.</text>
</comment>
<comment type="catalytic activity">
    <reaction evidence="1">
        <text>(2R)-2,3-dihydroxy-3-methylbutanoate = 3-methyl-2-oxobutanoate + H2O</text>
        <dbReference type="Rhea" id="RHEA:24809"/>
        <dbReference type="ChEBI" id="CHEBI:11851"/>
        <dbReference type="ChEBI" id="CHEBI:15377"/>
        <dbReference type="ChEBI" id="CHEBI:49072"/>
        <dbReference type="EC" id="4.2.1.9"/>
    </reaction>
    <physiologicalReaction direction="left-to-right" evidence="1">
        <dbReference type="Rhea" id="RHEA:24810"/>
    </physiologicalReaction>
</comment>
<comment type="catalytic activity">
    <reaction evidence="1">
        <text>(2R,3R)-2,3-dihydroxy-3-methylpentanoate = (S)-3-methyl-2-oxopentanoate + H2O</text>
        <dbReference type="Rhea" id="RHEA:27694"/>
        <dbReference type="ChEBI" id="CHEBI:15377"/>
        <dbReference type="ChEBI" id="CHEBI:35146"/>
        <dbReference type="ChEBI" id="CHEBI:49258"/>
        <dbReference type="EC" id="4.2.1.9"/>
    </reaction>
    <physiologicalReaction direction="left-to-right" evidence="1">
        <dbReference type="Rhea" id="RHEA:27695"/>
    </physiologicalReaction>
</comment>
<comment type="cofactor">
    <cofactor evidence="1">
        <name>[2Fe-2S] cluster</name>
        <dbReference type="ChEBI" id="CHEBI:190135"/>
    </cofactor>
    <text evidence="1">Binds 1 [2Fe-2S] cluster per subunit. This cluster acts as a Lewis acid cofactor.</text>
</comment>
<comment type="cofactor">
    <cofactor evidence="1">
        <name>Mg(2+)</name>
        <dbReference type="ChEBI" id="CHEBI:18420"/>
    </cofactor>
</comment>
<comment type="pathway">
    <text evidence="1">Amino-acid biosynthesis; L-isoleucine biosynthesis; L-isoleucine from 2-oxobutanoate: step 3/4.</text>
</comment>
<comment type="pathway">
    <text evidence="1">Amino-acid biosynthesis; L-valine biosynthesis; L-valine from pyruvate: step 3/4.</text>
</comment>
<comment type="subunit">
    <text evidence="1">Homodimer.</text>
</comment>
<comment type="similarity">
    <text evidence="1">Belongs to the IlvD/Edd family.</text>
</comment>
<feature type="chain" id="PRO_1000089392" description="Dihydroxy-acid dehydratase">
    <location>
        <begin position="1"/>
        <end position="612"/>
    </location>
</feature>
<feature type="active site" description="Proton acceptor" evidence="1">
    <location>
        <position position="518"/>
    </location>
</feature>
<feature type="binding site" evidence="1">
    <location>
        <position position="81"/>
    </location>
    <ligand>
        <name>Mg(2+)</name>
        <dbReference type="ChEBI" id="CHEBI:18420"/>
    </ligand>
</feature>
<feature type="binding site" evidence="1">
    <location>
        <position position="122"/>
    </location>
    <ligand>
        <name>[2Fe-2S] cluster</name>
        <dbReference type="ChEBI" id="CHEBI:190135"/>
    </ligand>
</feature>
<feature type="binding site" evidence="1">
    <location>
        <position position="123"/>
    </location>
    <ligand>
        <name>Mg(2+)</name>
        <dbReference type="ChEBI" id="CHEBI:18420"/>
    </ligand>
</feature>
<feature type="binding site" description="via carbamate group" evidence="1">
    <location>
        <position position="124"/>
    </location>
    <ligand>
        <name>Mg(2+)</name>
        <dbReference type="ChEBI" id="CHEBI:18420"/>
    </ligand>
</feature>
<feature type="binding site" evidence="1">
    <location>
        <position position="195"/>
    </location>
    <ligand>
        <name>[2Fe-2S] cluster</name>
        <dbReference type="ChEBI" id="CHEBI:190135"/>
    </ligand>
</feature>
<feature type="binding site" evidence="1">
    <location>
        <position position="492"/>
    </location>
    <ligand>
        <name>Mg(2+)</name>
        <dbReference type="ChEBI" id="CHEBI:18420"/>
    </ligand>
</feature>
<feature type="modified residue" description="N6-carboxylysine" evidence="1">
    <location>
        <position position="124"/>
    </location>
</feature>
<sequence length="612" mass="64991">MPQLRSATSTTGRNMAGARALWRATGMGSEDFGKPIVAIANSFTQFVPGHVHLKNMGELVASAVQEAGGVAKEFNTIAVDDGIAMGHDGMLYSLPSRDIIADSVEYMVNAHCADALVCISNCDKITPGMLMAALRLNIPVVFVSGGPMESGEGVEGVVEHRVDLVDAMSLAVDESVTDAQLAQIEENACPTCGSCSGMFTANSMNCLTEALGLSLPGNGTTLATHVNRKRLFLEAGRRAVESAKKYYEQDDESVLPRSIATKAAFENAMALDIAMGGSTNTVLHILAAAQEAEVDFNLSDIDALSRQVPCLAKVAPNSTTFHIEHVHRAGGIPAILGELRRGGLLNEDVHTVHSQTMGEWLDEWDIRSGKASDAAKEFFLAAPGGVRTTQAFSQANEYEDHDVDAAGGCIRSVEHAYTKEGGLCVLFGNIAEDGAVIKTAGIDPELFHFTGRAFVVESQDEAVHEILSKNVKEGDIVVIAYEGPKGGPGMQEMLYPTSYLKGLGLGKKCALITDGRFSGGTSGLSIGHISPEAAAGGAVGLVQHGDEIEIDVENRVLRVNVDDAELARRRQEKGDAPWKPTKPRERRVSKALKAYASMVTSADKGAVRVVED</sequence>
<evidence type="ECO:0000255" key="1">
    <source>
        <dbReference type="HAMAP-Rule" id="MF_00012"/>
    </source>
</evidence>
<gene>
    <name evidence="1" type="primary">ilvD</name>
    <name type="ordered locus">KRH_02560</name>
</gene>
<dbReference type="EC" id="4.2.1.9" evidence="1"/>
<dbReference type="EMBL" id="AP009152">
    <property type="protein sequence ID" value="BAG28603.1"/>
    <property type="molecule type" value="Genomic_DNA"/>
</dbReference>
<dbReference type="RefSeq" id="WP_012397330.1">
    <property type="nucleotide sequence ID" value="NC_010617.1"/>
</dbReference>
<dbReference type="SMR" id="B2GLR9"/>
<dbReference type="STRING" id="378753.KRH_02560"/>
<dbReference type="KEGG" id="krh:KRH_02560"/>
<dbReference type="eggNOG" id="COG0129">
    <property type="taxonomic scope" value="Bacteria"/>
</dbReference>
<dbReference type="HOGENOM" id="CLU_014271_4_3_11"/>
<dbReference type="OrthoDB" id="9807077at2"/>
<dbReference type="UniPathway" id="UPA00047">
    <property type="reaction ID" value="UER00057"/>
</dbReference>
<dbReference type="UniPathway" id="UPA00049">
    <property type="reaction ID" value="UER00061"/>
</dbReference>
<dbReference type="Proteomes" id="UP000008838">
    <property type="component" value="Chromosome"/>
</dbReference>
<dbReference type="GO" id="GO:0005829">
    <property type="term" value="C:cytosol"/>
    <property type="evidence" value="ECO:0007669"/>
    <property type="project" value="TreeGrafter"/>
</dbReference>
<dbReference type="GO" id="GO:0051537">
    <property type="term" value="F:2 iron, 2 sulfur cluster binding"/>
    <property type="evidence" value="ECO:0007669"/>
    <property type="project" value="UniProtKB-UniRule"/>
</dbReference>
<dbReference type="GO" id="GO:0004160">
    <property type="term" value="F:dihydroxy-acid dehydratase activity"/>
    <property type="evidence" value="ECO:0007669"/>
    <property type="project" value="UniProtKB-UniRule"/>
</dbReference>
<dbReference type="GO" id="GO:0000287">
    <property type="term" value="F:magnesium ion binding"/>
    <property type="evidence" value="ECO:0007669"/>
    <property type="project" value="UniProtKB-UniRule"/>
</dbReference>
<dbReference type="GO" id="GO:0009097">
    <property type="term" value="P:isoleucine biosynthetic process"/>
    <property type="evidence" value="ECO:0007669"/>
    <property type="project" value="UniProtKB-UniRule"/>
</dbReference>
<dbReference type="GO" id="GO:0009099">
    <property type="term" value="P:L-valine biosynthetic process"/>
    <property type="evidence" value="ECO:0007669"/>
    <property type="project" value="UniProtKB-UniRule"/>
</dbReference>
<dbReference type="FunFam" id="3.50.30.80:FF:000001">
    <property type="entry name" value="Dihydroxy-acid dehydratase"/>
    <property type="match status" value="1"/>
</dbReference>
<dbReference type="Gene3D" id="3.50.30.80">
    <property type="entry name" value="IlvD/EDD C-terminal domain-like"/>
    <property type="match status" value="1"/>
</dbReference>
<dbReference type="HAMAP" id="MF_00012">
    <property type="entry name" value="IlvD"/>
    <property type="match status" value="1"/>
</dbReference>
<dbReference type="InterPro" id="IPR042096">
    <property type="entry name" value="Dihydro-acid_dehy_C"/>
</dbReference>
<dbReference type="InterPro" id="IPR004404">
    <property type="entry name" value="DihydroxyA_deHydtase"/>
</dbReference>
<dbReference type="InterPro" id="IPR020558">
    <property type="entry name" value="DiOHA_6PGluconate_deHydtase_CS"/>
</dbReference>
<dbReference type="InterPro" id="IPR056740">
    <property type="entry name" value="ILV_EDD_C"/>
</dbReference>
<dbReference type="InterPro" id="IPR000581">
    <property type="entry name" value="ILV_EDD_N"/>
</dbReference>
<dbReference type="InterPro" id="IPR037237">
    <property type="entry name" value="IlvD/EDD_N"/>
</dbReference>
<dbReference type="NCBIfam" id="TIGR00110">
    <property type="entry name" value="ilvD"/>
    <property type="match status" value="1"/>
</dbReference>
<dbReference type="NCBIfam" id="NF009103">
    <property type="entry name" value="PRK12448.1"/>
    <property type="match status" value="1"/>
</dbReference>
<dbReference type="PANTHER" id="PTHR43661">
    <property type="entry name" value="D-XYLONATE DEHYDRATASE"/>
    <property type="match status" value="1"/>
</dbReference>
<dbReference type="PANTHER" id="PTHR43661:SF3">
    <property type="entry name" value="D-XYLONATE DEHYDRATASE YAGF-RELATED"/>
    <property type="match status" value="1"/>
</dbReference>
<dbReference type="Pfam" id="PF24877">
    <property type="entry name" value="ILV_EDD_C"/>
    <property type="match status" value="1"/>
</dbReference>
<dbReference type="Pfam" id="PF00920">
    <property type="entry name" value="ILVD_EDD_N"/>
    <property type="match status" value="1"/>
</dbReference>
<dbReference type="SUPFAM" id="SSF143975">
    <property type="entry name" value="IlvD/EDD N-terminal domain-like"/>
    <property type="match status" value="1"/>
</dbReference>
<dbReference type="SUPFAM" id="SSF52016">
    <property type="entry name" value="LeuD/IlvD-like"/>
    <property type="match status" value="1"/>
</dbReference>
<dbReference type="PROSITE" id="PS00886">
    <property type="entry name" value="ILVD_EDD_1"/>
    <property type="match status" value="1"/>
</dbReference>
<dbReference type="PROSITE" id="PS00887">
    <property type="entry name" value="ILVD_EDD_2"/>
    <property type="match status" value="1"/>
</dbReference>